<sequence>MSDYKTTLNLPETGFPMRGDLAKREPDMLKRWYEQDLYGIIRNAKKGKKTFILHDGPPYANGSIHIGHSVNKILKDIIVKSKGLSGYDSPYVPGWDCHGLPIELKVEQLIGKPGEKVSAAEFRAECRKYAAEQVAGQKADFIRLGVLGDWDRPYLTMDFKTEANIIRALGRIIENGHLHKGAKPVHWCADCGSALAEAEVEYYDKTSPSIDVTFNASDVAAVLAKFGVSRVDGPISLVIWTTTPWTLPANRAISLNAEFDYQLVQIDGQALILAADLVESVMKRVGVTQWIVLGDCKGADLELLRFKHPFLGFDVPAILGDHVTLDAGTGAVHTAGGHGPDDYVISQKYNLEIANPVGPNGCYLSGTYPELDGKFVFKANDLIVEILREKSMLLHVEKLQHSYPCCWRHKSPIIFRATPQWFVSMDQKGLRKQSLSEIKDVQWIPDWGQARIEAMVANRPDWCISRQRTWGVPMSLFVHKETEELHPRTAELIEAVAKRVEADGIQAWWDLDPADVLGADADNYVKVPDTLDVWFDSGSTHASVVDVRPEFGGHEADMYLEGSDQHRGWFMSSLMISTAIKGKAPYRQVLTHGFTVDGQGRKMSKSIGNTVSPQDVMNKLGADILRLWIGSTDYSGEIAVSDEILKRSADAYRRIRNTARFLLANLNGFDPQKDSVKPEDMVVLDRWAVGCAKAAQDEILEAYESYDFHRVVQRLMQFCSIEMGSFYLDIIKDRQYTAKGDSVARRSCQTALYHISEALVRWMAPIMSFTADELWNYLPGERAQYVFTEEWYDGLFALDASETMNDAFWADVLKVRSEVNKVIEQARNDKRIGGSLEASVTLYADANLADKLNQLRQELHFALLTSKARVERYENAPDSAQATELTGLKIALSEAEGHKCPRCWHYETDIGSNADHPEVCGRCATNVGGNGEERKFV</sequence>
<gene>
    <name evidence="1" type="primary">ileS</name>
    <name type="ordered locus">ECA3876</name>
</gene>
<evidence type="ECO:0000255" key="1">
    <source>
        <dbReference type="HAMAP-Rule" id="MF_02002"/>
    </source>
</evidence>
<name>SYI_PECAS</name>
<feature type="chain" id="PRO_0000098383" description="Isoleucine--tRNA ligase">
    <location>
        <begin position="1"/>
        <end position="937"/>
    </location>
</feature>
<feature type="short sequence motif" description="'HIGH' region">
    <location>
        <begin position="58"/>
        <end position="68"/>
    </location>
</feature>
<feature type="short sequence motif" description="'KMSKS' region">
    <location>
        <begin position="602"/>
        <end position="606"/>
    </location>
</feature>
<feature type="binding site" evidence="1">
    <location>
        <position position="561"/>
    </location>
    <ligand>
        <name>L-isoleucyl-5'-AMP</name>
        <dbReference type="ChEBI" id="CHEBI:178002"/>
    </ligand>
</feature>
<feature type="binding site" evidence="1">
    <location>
        <position position="605"/>
    </location>
    <ligand>
        <name>ATP</name>
        <dbReference type="ChEBI" id="CHEBI:30616"/>
    </ligand>
</feature>
<feature type="binding site" evidence="1">
    <location>
        <position position="900"/>
    </location>
    <ligand>
        <name>Zn(2+)</name>
        <dbReference type="ChEBI" id="CHEBI:29105"/>
    </ligand>
</feature>
<feature type="binding site" evidence="1">
    <location>
        <position position="903"/>
    </location>
    <ligand>
        <name>Zn(2+)</name>
        <dbReference type="ChEBI" id="CHEBI:29105"/>
    </ligand>
</feature>
<feature type="binding site" evidence="1">
    <location>
        <position position="920"/>
    </location>
    <ligand>
        <name>Zn(2+)</name>
        <dbReference type="ChEBI" id="CHEBI:29105"/>
    </ligand>
</feature>
<feature type="binding site" evidence="1">
    <location>
        <position position="923"/>
    </location>
    <ligand>
        <name>Zn(2+)</name>
        <dbReference type="ChEBI" id="CHEBI:29105"/>
    </ligand>
</feature>
<reference key="1">
    <citation type="journal article" date="2004" name="Proc. Natl. Acad. Sci. U.S.A.">
        <title>Genome sequence of the enterobacterial phytopathogen Erwinia carotovora subsp. atroseptica and characterization of virulence factors.</title>
        <authorList>
            <person name="Bell K.S."/>
            <person name="Sebaihia M."/>
            <person name="Pritchard L."/>
            <person name="Holden M.T.G."/>
            <person name="Hyman L.J."/>
            <person name="Holeva M.C."/>
            <person name="Thomson N.R."/>
            <person name="Bentley S.D."/>
            <person name="Churcher L.J.C."/>
            <person name="Mungall K."/>
            <person name="Atkin R."/>
            <person name="Bason N."/>
            <person name="Brooks K."/>
            <person name="Chillingworth T."/>
            <person name="Clark K."/>
            <person name="Doggett J."/>
            <person name="Fraser A."/>
            <person name="Hance Z."/>
            <person name="Hauser H."/>
            <person name="Jagels K."/>
            <person name="Moule S."/>
            <person name="Norbertczak H."/>
            <person name="Ormond D."/>
            <person name="Price C."/>
            <person name="Quail M.A."/>
            <person name="Sanders M."/>
            <person name="Walker D."/>
            <person name="Whitehead S."/>
            <person name="Salmond G.P.C."/>
            <person name="Birch P.R.J."/>
            <person name="Parkhill J."/>
            <person name="Toth I.K."/>
        </authorList>
    </citation>
    <scope>NUCLEOTIDE SEQUENCE [LARGE SCALE GENOMIC DNA]</scope>
    <source>
        <strain>SCRI 1043 / ATCC BAA-672</strain>
    </source>
</reference>
<comment type="function">
    <text evidence="1">Catalyzes the attachment of isoleucine to tRNA(Ile). As IleRS can inadvertently accommodate and process structurally similar amino acids such as valine, to avoid such errors it has two additional distinct tRNA(Ile)-dependent editing activities. One activity is designated as 'pretransfer' editing and involves the hydrolysis of activated Val-AMP. The other activity is designated 'posttransfer' editing and involves deacylation of mischarged Val-tRNA(Ile).</text>
</comment>
<comment type="catalytic activity">
    <reaction evidence="1">
        <text>tRNA(Ile) + L-isoleucine + ATP = L-isoleucyl-tRNA(Ile) + AMP + diphosphate</text>
        <dbReference type="Rhea" id="RHEA:11060"/>
        <dbReference type="Rhea" id="RHEA-COMP:9666"/>
        <dbReference type="Rhea" id="RHEA-COMP:9695"/>
        <dbReference type="ChEBI" id="CHEBI:30616"/>
        <dbReference type="ChEBI" id="CHEBI:33019"/>
        <dbReference type="ChEBI" id="CHEBI:58045"/>
        <dbReference type="ChEBI" id="CHEBI:78442"/>
        <dbReference type="ChEBI" id="CHEBI:78528"/>
        <dbReference type="ChEBI" id="CHEBI:456215"/>
        <dbReference type="EC" id="6.1.1.5"/>
    </reaction>
</comment>
<comment type="cofactor">
    <cofactor evidence="1">
        <name>Zn(2+)</name>
        <dbReference type="ChEBI" id="CHEBI:29105"/>
    </cofactor>
    <text evidence="1">Binds 1 zinc ion per subunit.</text>
</comment>
<comment type="subunit">
    <text evidence="1">Monomer.</text>
</comment>
<comment type="subcellular location">
    <subcellularLocation>
        <location evidence="1">Cytoplasm</location>
    </subcellularLocation>
</comment>
<comment type="domain">
    <text evidence="1">IleRS has two distinct active sites: one for aminoacylation and one for editing. The misactivated valine is translocated from the active site to the editing site, which sterically excludes the correctly activated isoleucine. The single editing site contains two valyl binding pockets, one specific for each substrate (Val-AMP or Val-tRNA(Ile)).</text>
</comment>
<comment type="similarity">
    <text evidence="1">Belongs to the class-I aminoacyl-tRNA synthetase family. IleS type 1 subfamily.</text>
</comment>
<protein>
    <recommendedName>
        <fullName evidence="1">Isoleucine--tRNA ligase</fullName>
        <ecNumber evidence="1">6.1.1.5</ecNumber>
    </recommendedName>
    <alternativeName>
        <fullName evidence="1">Isoleucyl-tRNA synthetase</fullName>
        <shortName evidence="1">IleRS</shortName>
    </alternativeName>
</protein>
<proteinExistence type="inferred from homology"/>
<accession>Q6D0C3</accession>
<organism>
    <name type="scientific">Pectobacterium atrosepticum (strain SCRI 1043 / ATCC BAA-672)</name>
    <name type="common">Erwinia carotovora subsp. atroseptica</name>
    <dbReference type="NCBI Taxonomy" id="218491"/>
    <lineage>
        <taxon>Bacteria</taxon>
        <taxon>Pseudomonadati</taxon>
        <taxon>Pseudomonadota</taxon>
        <taxon>Gammaproteobacteria</taxon>
        <taxon>Enterobacterales</taxon>
        <taxon>Pectobacteriaceae</taxon>
        <taxon>Pectobacterium</taxon>
    </lineage>
</organism>
<keyword id="KW-0030">Aminoacyl-tRNA synthetase</keyword>
<keyword id="KW-0067">ATP-binding</keyword>
<keyword id="KW-0963">Cytoplasm</keyword>
<keyword id="KW-0436">Ligase</keyword>
<keyword id="KW-0479">Metal-binding</keyword>
<keyword id="KW-0547">Nucleotide-binding</keyword>
<keyword id="KW-0648">Protein biosynthesis</keyword>
<keyword id="KW-1185">Reference proteome</keyword>
<keyword id="KW-0862">Zinc</keyword>
<dbReference type="EC" id="6.1.1.5" evidence="1"/>
<dbReference type="EMBL" id="BX950851">
    <property type="protein sequence ID" value="CAG76774.1"/>
    <property type="molecule type" value="Genomic_DNA"/>
</dbReference>
<dbReference type="RefSeq" id="WP_011095374.1">
    <property type="nucleotide sequence ID" value="NC_004547.2"/>
</dbReference>
<dbReference type="SMR" id="Q6D0C3"/>
<dbReference type="STRING" id="218491.ECA3876"/>
<dbReference type="KEGG" id="eca:ECA3876"/>
<dbReference type="PATRIC" id="fig|218491.5.peg.3932"/>
<dbReference type="eggNOG" id="COG0060">
    <property type="taxonomic scope" value="Bacteria"/>
</dbReference>
<dbReference type="HOGENOM" id="CLU_001493_7_1_6"/>
<dbReference type="OrthoDB" id="9810365at2"/>
<dbReference type="Proteomes" id="UP000007966">
    <property type="component" value="Chromosome"/>
</dbReference>
<dbReference type="GO" id="GO:0005829">
    <property type="term" value="C:cytosol"/>
    <property type="evidence" value="ECO:0007669"/>
    <property type="project" value="TreeGrafter"/>
</dbReference>
<dbReference type="GO" id="GO:0002161">
    <property type="term" value="F:aminoacyl-tRNA deacylase activity"/>
    <property type="evidence" value="ECO:0007669"/>
    <property type="project" value="InterPro"/>
</dbReference>
<dbReference type="GO" id="GO:0005524">
    <property type="term" value="F:ATP binding"/>
    <property type="evidence" value="ECO:0007669"/>
    <property type="project" value="UniProtKB-UniRule"/>
</dbReference>
<dbReference type="GO" id="GO:0004822">
    <property type="term" value="F:isoleucine-tRNA ligase activity"/>
    <property type="evidence" value="ECO:0007669"/>
    <property type="project" value="UniProtKB-UniRule"/>
</dbReference>
<dbReference type="GO" id="GO:0000049">
    <property type="term" value="F:tRNA binding"/>
    <property type="evidence" value="ECO:0007669"/>
    <property type="project" value="InterPro"/>
</dbReference>
<dbReference type="GO" id="GO:0008270">
    <property type="term" value="F:zinc ion binding"/>
    <property type="evidence" value="ECO:0007669"/>
    <property type="project" value="UniProtKB-UniRule"/>
</dbReference>
<dbReference type="GO" id="GO:0006428">
    <property type="term" value="P:isoleucyl-tRNA aminoacylation"/>
    <property type="evidence" value="ECO:0007669"/>
    <property type="project" value="UniProtKB-UniRule"/>
</dbReference>
<dbReference type="CDD" id="cd07960">
    <property type="entry name" value="Anticodon_Ia_Ile_BEm"/>
    <property type="match status" value="1"/>
</dbReference>
<dbReference type="CDD" id="cd00818">
    <property type="entry name" value="IleRS_core"/>
    <property type="match status" value="1"/>
</dbReference>
<dbReference type="FunFam" id="1.10.730.20:FF:000001">
    <property type="entry name" value="Isoleucine--tRNA ligase"/>
    <property type="match status" value="1"/>
</dbReference>
<dbReference type="FunFam" id="3.40.50.620:FF:000042">
    <property type="entry name" value="Isoleucine--tRNA ligase"/>
    <property type="match status" value="1"/>
</dbReference>
<dbReference type="FunFam" id="3.40.50.620:FF:000048">
    <property type="entry name" value="Isoleucine--tRNA ligase"/>
    <property type="match status" value="1"/>
</dbReference>
<dbReference type="FunFam" id="3.90.740.10:FF:000002">
    <property type="entry name" value="Isoleucine--tRNA ligase"/>
    <property type="match status" value="1"/>
</dbReference>
<dbReference type="Gene3D" id="1.10.730.20">
    <property type="match status" value="1"/>
</dbReference>
<dbReference type="Gene3D" id="3.40.50.620">
    <property type="entry name" value="HUPs"/>
    <property type="match status" value="2"/>
</dbReference>
<dbReference type="Gene3D" id="3.90.740.10">
    <property type="entry name" value="Valyl/Leucyl/Isoleucyl-tRNA synthetase, editing domain"/>
    <property type="match status" value="1"/>
</dbReference>
<dbReference type="HAMAP" id="MF_02002">
    <property type="entry name" value="Ile_tRNA_synth_type1"/>
    <property type="match status" value="1"/>
</dbReference>
<dbReference type="InterPro" id="IPR001412">
    <property type="entry name" value="aa-tRNA-synth_I_CS"/>
</dbReference>
<dbReference type="InterPro" id="IPR002300">
    <property type="entry name" value="aa-tRNA-synth_Ia"/>
</dbReference>
<dbReference type="InterPro" id="IPR033708">
    <property type="entry name" value="Anticodon_Ile_BEm"/>
</dbReference>
<dbReference type="InterPro" id="IPR002301">
    <property type="entry name" value="Ile-tRNA-ligase"/>
</dbReference>
<dbReference type="InterPro" id="IPR023585">
    <property type="entry name" value="Ile-tRNA-ligase_type1"/>
</dbReference>
<dbReference type="InterPro" id="IPR050081">
    <property type="entry name" value="Ile-tRNA_ligase"/>
</dbReference>
<dbReference type="InterPro" id="IPR013155">
    <property type="entry name" value="M/V/L/I-tRNA-synth_anticd-bd"/>
</dbReference>
<dbReference type="InterPro" id="IPR014729">
    <property type="entry name" value="Rossmann-like_a/b/a_fold"/>
</dbReference>
<dbReference type="InterPro" id="IPR009080">
    <property type="entry name" value="tRNAsynth_Ia_anticodon-bd"/>
</dbReference>
<dbReference type="InterPro" id="IPR009008">
    <property type="entry name" value="Val/Leu/Ile-tRNA-synth_edit"/>
</dbReference>
<dbReference type="InterPro" id="IPR010663">
    <property type="entry name" value="Znf_FPG/IleRS"/>
</dbReference>
<dbReference type="NCBIfam" id="TIGR00392">
    <property type="entry name" value="ileS"/>
    <property type="match status" value="1"/>
</dbReference>
<dbReference type="PANTHER" id="PTHR42765:SF1">
    <property type="entry name" value="ISOLEUCINE--TRNA LIGASE, MITOCHONDRIAL"/>
    <property type="match status" value="1"/>
</dbReference>
<dbReference type="PANTHER" id="PTHR42765">
    <property type="entry name" value="SOLEUCYL-TRNA SYNTHETASE"/>
    <property type="match status" value="1"/>
</dbReference>
<dbReference type="Pfam" id="PF08264">
    <property type="entry name" value="Anticodon_1"/>
    <property type="match status" value="1"/>
</dbReference>
<dbReference type="Pfam" id="PF00133">
    <property type="entry name" value="tRNA-synt_1"/>
    <property type="match status" value="1"/>
</dbReference>
<dbReference type="Pfam" id="PF06827">
    <property type="entry name" value="zf-FPG_IleRS"/>
    <property type="match status" value="1"/>
</dbReference>
<dbReference type="PRINTS" id="PR00984">
    <property type="entry name" value="TRNASYNTHILE"/>
</dbReference>
<dbReference type="SUPFAM" id="SSF47323">
    <property type="entry name" value="Anticodon-binding domain of a subclass of class I aminoacyl-tRNA synthetases"/>
    <property type="match status" value="1"/>
</dbReference>
<dbReference type="SUPFAM" id="SSF52374">
    <property type="entry name" value="Nucleotidylyl transferase"/>
    <property type="match status" value="1"/>
</dbReference>
<dbReference type="SUPFAM" id="SSF50677">
    <property type="entry name" value="ValRS/IleRS/LeuRS editing domain"/>
    <property type="match status" value="1"/>
</dbReference>
<dbReference type="PROSITE" id="PS00178">
    <property type="entry name" value="AA_TRNA_LIGASE_I"/>
    <property type="match status" value="1"/>
</dbReference>